<dbReference type="EC" id="3.1.13.1" evidence="1"/>
<dbReference type="EMBL" id="BC121935">
    <property type="protein sequence ID" value="AAI21936.1"/>
    <property type="status" value="ALT_INIT"/>
    <property type="molecule type" value="mRNA"/>
</dbReference>
<dbReference type="RefSeq" id="NP_001072835.1">
    <property type="nucleotide sequence ID" value="NM_001079367.1"/>
</dbReference>
<dbReference type="SMR" id="Q0P4R5"/>
<dbReference type="FunCoup" id="Q0P4R5">
    <property type="interactions" value="261"/>
</dbReference>
<dbReference type="STRING" id="8364.ENSXETP00000006763"/>
<dbReference type="PaxDb" id="8364-ENSXETP00000034647"/>
<dbReference type="DNASU" id="780296"/>
<dbReference type="GeneID" id="780296"/>
<dbReference type="KEGG" id="xtr:780296"/>
<dbReference type="AGR" id="Xenbase:XB-GENE-1013178"/>
<dbReference type="CTD" id="115752"/>
<dbReference type="Xenbase" id="XB-GENE-1013178">
    <property type="gene designation" value="dis3l"/>
</dbReference>
<dbReference type="eggNOG" id="KOG2102">
    <property type="taxonomic scope" value="Eukaryota"/>
</dbReference>
<dbReference type="InParanoid" id="Q0P4R5"/>
<dbReference type="OrthoDB" id="372421at2759"/>
<dbReference type="Proteomes" id="UP000008143">
    <property type="component" value="Chromosome 3"/>
</dbReference>
<dbReference type="GO" id="GO:0000177">
    <property type="term" value="C:cytoplasmic exosome (RNase complex)"/>
    <property type="evidence" value="ECO:0000250"/>
    <property type="project" value="UniProtKB"/>
</dbReference>
<dbReference type="GO" id="GO:0000175">
    <property type="term" value="F:3'-5'-RNA exonuclease activity"/>
    <property type="evidence" value="ECO:0000250"/>
    <property type="project" value="UniProtKB"/>
</dbReference>
<dbReference type="GO" id="GO:0008859">
    <property type="term" value="F:exoribonuclease II activity"/>
    <property type="evidence" value="ECO:0000250"/>
    <property type="project" value="UniProtKB"/>
</dbReference>
<dbReference type="GO" id="GO:0003723">
    <property type="term" value="F:RNA binding"/>
    <property type="evidence" value="ECO:0007669"/>
    <property type="project" value="UniProtKB-KW"/>
</dbReference>
<dbReference type="CDD" id="cd09862">
    <property type="entry name" value="PIN_Rrp44-like"/>
    <property type="match status" value="1"/>
</dbReference>
<dbReference type="FunFam" id="2.40.50.140:FF:000143">
    <property type="entry name" value="DIS3-like exonuclease 1 isoform X1"/>
    <property type="match status" value="1"/>
</dbReference>
<dbReference type="FunFam" id="2.40.50.690:FF:000004">
    <property type="entry name" value="DIS3-like exonuclease 1 isoform X1"/>
    <property type="match status" value="1"/>
</dbReference>
<dbReference type="FunFam" id="3.40.50.1010:FF:000021">
    <property type="entry name" value="DIS3-like exonuclease 1 isoform X1"/>
    <property type="match status" value="1"/>
</dbReference>
<dbReference type="FunFam" id="2.40.50.700:FF:000004">
    <property type="entry name" value="Exosome complex exonuclease RRP44 homolog A"/>
    <property type="match status" value="1"/>
</dbReference>
<dbReference type="Gene3D" id="2.40.50.690">
    <property type="match status" value="1"/>
</dbReference>
<dbReference type="Gene3D" id="2.40.50.700">
    <property type="match status" value="1"/>
</dbReference>
<dbReference type="Gene3D" id="3.40.50.1010">
    <property type="entry name" value="5'-nuclease"/>
    <property type="match status" value="1"/>
</dbReference>
<dbReference type="Gene3D" id="2.40.50.140">
    <property type="entry name" value="Nucleic acid-binding proteins"/>
    <property type="match status" value="1"/>
</dbReference>
<dbReference type="InterPro" id="IPR041505">
    <property type="entry name" value="Dis3_CSD2"/>
</dbReference>
<dbReference type="InterPro" id="IPR012340">
    <property type="entry name" value="NA-bd_OB-fold"/>
</dbReference>
<dbReference type="InterPro" id="IPR001900">
    <property type="entry name" value="RNase_II/R"/>
</dbReference>
<dbReference type="InterPro" id="IPR022966">
    <property type="entry name" value="RNase_II/R_CS"/>
</dbReference>
<dbReference type="InterPro" id="IPR050180">
    <property type="entry name" value="RNR_Ribonuclease"/>
</dbReference>
<dbReference type="InterPro" id="IPR033771">
    <property type="entry name" value="Rrp44_CSD1"/>
</dbReference>
<dbReference type="PANTHER" id="PTHR23355:SF30">
    <property type="entry name" value="DIS3-LIKE EXONUCLEASE 1"/>
    <property type="match status" value="1"/>
</dbReference>
<dbReference type="PANTHER" id="PTHR23355">
    <property type="entry name" value="RIBONUCLEASE"/>
    <property type="match status" value="1"/>
</dbReference>
<dbReference type="Pfam" id="PF17849">
    <property type="entry name" value="OB_Dis3"/>
    <property type="match status" value="1"/>
</dbReference>
<dbReference type="Pfam" id="PF00773">
    <property type="entry name" value="RNB"/>
    <property type="match status" value="1"/>
</dbReference>
<dbReference type="Pfam" id="PF17216">
    <property type="entry name" value="Rrp44_CSD1"/>
    <property type="match status" value="1"/>
</dbReference>
<dbReference type="SMART" id="SM00955">
    <property type="entry name" value="RNB"/>
    <property type="match status" value="1"/>
</dbReference>
<dbReference type="SUPFAM" id="SSF50249">
    <property type="entry name" value="Nucleic acid-binding proteins"/>
    <property type="match status" value="3"/>
</dbReference>
<dbReference type="PROSITE" id="PS01175">
    <property type="entry name" value="RIBONUCLEASE_II"/>
    <property type="match status" value="1"/>
</dbReference>
<feature type="chain" id="PRO_0000314816" description="DIS3-like exonuclease 1">
    <location>
        <begin position="1"/>
        <end position="1039"/>
    </location>
</feature>
<feature type="domain" description="CSD1" evidence="2">
    <location>
        <begin position="221"/>
        <end position="309"/>
    </location>
</feature>
<feature type="domain" description="CSD2" evidence="2">
    <location>
        <begin position="359"/>
        <end position="425"/>
    </location>
</feature>
<feature type="domain" description="RNB" evidence="2">
    <location>
        <begin position="458"/>
        <end position="807"/>
    </location>
</feature>
<accession>Q0P4R5</accession>
<gene>
    <name type="primary">dis3l</name>
</gene>
<sequence>MLKTEKILHLKARGRSVRAVREHYLREDVRCGSALCLTCPRDGKLLSEDLTHYVVPDCQILQDYLEVLEFPELRGIIIMQTACQSVQHQRGRRQYKRLCSLLRDTRHDCILFSNEFQNHAYLPREMGESALAWQTRCIYNSCVWYYQHCQKKIPVVMVTEDKSVIRQYNTETQEVYVVSFQIYLETFWPNLKGALELYKSLKETHRERELESREGNGKEYPEHLPLEILEAGIKSGRYQQGVLSVNKHRAQLEGFVRLQGLGGKETDIQSDILIYGTKPRNRAIHGDLVAVELLSRSEWKGRNGALCENETDEKAVDAQAEVMPTGRVVGILQRNWRDYVATFPAKEDIETQGKNAQRVLVMPWDYRIPKIRISTQQAEALQDYRVVVRIDSWESTSLYPNGHFVRVLGRTGNLEAEIATILVENSISVNPFSEAQLAEMPSNTPESPWQVKPEEGDRLDLRKTHLVFSIDPKGCEDVDDALSIRKLPSGHLELGVHIADVTHFVPPNTYTDIEARSRATTYYLADRRYDMLPLILSADLCSLLGGVDRYAVSVIWEMDSSTYEIRRVWYGRTIIRSSYKLSYEVAQQLMDGDLEPLNTEMELHPLKQDPVRLEQLLWAVGKLTEVAHATRMRRDMSGALELEGVEVRVQLGEKHSIDDLVPKQPLQMHETIAECMILANHWVAKKIWECYPQHALLRLHPPARQEFFQELKECAKARGFSIDTRSNKALADSLDQANDPSDPLVNQLLRMMATQAMSNARYFSTGSYTEDEFYHYGLALEKYTHFTSPIRRYADIVVHRLLLAAVNKGPKDNLLGNKDLEELCRHINVRNRAAQHCQKQSTELFQCMFFKDKDPDSDQRCISDAVIYGIRTNGVLLFLPRYGIKGAAYLKNIDGLVLACKDNGRCHWMPGSLQRLPDRIVVTTQEAKSFSYCLFDHVTVRIHVQSSRFHPDSIRLEIIRNRPHSSQEALPSASNPQLARSELVKEVTRTAVEAQLAVEGAEELKPVEHYQEYRQTQGQSLYSMLEELWDLALLDVSGA</sequence>
<name>DI3L1_XENTR</name>
<comment type="function">
    <text evidence="1">Catalytic component of the RNA exosome complex which has 3'-&gt;5' exoribonuclease activity and participates in a multitude of cellular RNA processing and degradation events.</text>
</comment>
<comment type="catalytic activity">
    <reaction evidence="1">
        <text>Exonucleolytic cleavage in the 3'- to 5'-direction to yield nucleoside 5'-phosphates.</text>
        <dbReference type="EC" id="3.1.13.1"/>
    </reaction>
</comment>
<comment type="cofactor">
    <cofactor evidence="1">
        <name>Mg(2+)</name>
        <dbReference type="ChEBI" id="CHEBI:18420"/>
    </cofactor>
</comment>
<comment type="subunit">
    <text evidence="1">Component of the RNA exosome complex.</text>
</comment>
<comment type="subcellular location">
    <subcellularLocation>
        <location evidence="1">Cytoplasm</location>
    </subcellularLocation>
</comment>
<comment type="similarity">
    <text evidence="3">Belongs to the RNR ribonuclease family.</text>
</comment>
<comment type="sequence caution" evidence="3">
    <conflict type="erroneous initiation">
        <sequence resource="EMBL-CDS" id="AAI21936"/>
    </conflict>
    <text>Truncated N-terminus.</text>
</comment>
<organism>
    <name type="scientific">Xenopus tropicalis</name>
    <name type="common">Western clawed frog</name>
    <name type="synonym">Silurana tropicalis</name>
    <dbReference type="NCBI Taxonomy" id="8364"/>
    <lineage>
        <taxon>Eukaryota</taxon>
        <taxon>Metazoa</taxon>
        <taxon>Chordata</taxon>
        <taxon>Craniata</taxon>
        <taxon>Vertebrata</taxon>
        <taxon>Euteleostomi</taxon>
        <taxon>Amphibia</taxon>
        <taxon>Batrachia</taxon>
        <taxon>Anura</taxon>
        <taxon>Pipoidea</taxon>
        <taxon>Pipidae</taxon>
        <taxon>Xenopodinae</taxon>
        <taxon>Xenopus</taxon>
        <taxon>Silurana</taxon>
    </lineage>
</organism>
<evidence type="ECO:0000250" key="1">
    <source>
        <dbReference type="UniProtKB" id="Q8TF46"/>
    </source>
</evidence>
<evidence type="ECO:0000255" key="2"/>
<evidence type="ECO:0000305" key="3"/>
<keyword id="KW-0963">Cytoplasm</keyword>
<keyword id="KW-0269">Exonuclease</keyword>
<keyword id="KW-0271">Exosome</keyword>
<keyword id="KW-0378">Hydrolase</keyword>
<keyword id="KW-0460">Magnesium</keyword>
<keyword id="KW-0540">Nuclease</keyword>
<keyword id="KW-1185">Reference proteome</keyword>
<keyword id="KW-0694">RNA-binding</keyword>
<protein>
    <recommendedName>
        <fullName>DIS3-like exonuclease 1</fullName>
        <ecNumber evidence="1">3.1.13.1</ecNumber>
    </recommendedName>
</protein>
<reference key="1">
    <citation type="submission" date="2006-08" db="EMBL/GenBank/DDBJ databases">
        <authorList>
            <consortium name="NIH - Xenopus Gene Collection (XGC) project"/>
        </authorList>
    </citation>
    <scope>NUCLEOTIDE SEQUENCE [LARGE SCALE MRNA]</scope>
    <source>
        <tissue>Testis</tissue>
    </source>
</reference>
<proteinExistence type="evidence at transcript level"/>